<sequence>MSVARNLWRVADAPHIVPADSVERQTAERLINACPAGLFSLTPEGNLRIDYRSCLECGTCRLLCDESTLQQWRYPPSGFGITYRFG</sequence>
<name>YGCO_ECOLI</name>
<comment type="function">
    <text>Could be a 3Fe-4S cluster-containing protein. Probably participates in a redox process with YgcN, YgcQ and YgcR.</text>
</comment>
<comment type="similarity">
    <text evidence="2">Belongs to the bacterial-type ferredoxin family. FixX subfamily.</text>
</comment>
<comment type="sequence caution" evidence="2">
    <conflict type="erroneous initiation">
        <sequence resource="EMBL-CDS" id="AAA69277"/>
    </conflict>
</comment>
<gene>
    <name type="primary">ygcO</name>
    <name type="ordered locus">b2767</name>
    <name type="ordered locus">JW2737</name>
</gene>
<keyword id="KW-0249">Electron transport</keyword>
<keyword id="KW-0408">Iron</keyword>
<keyword id="KW-0411">Iron-sulfur</keyword>
<keyword id="KW-0479">Metal-binding</keyword>
<keyword id="KW-1185">Reference proteome</keyword>
<keyword id="KW-0813">Transport</keyword>
<proteinExistence type="inferred from homology"/>
<dbReference type="EMBL" id="U29579">
    <property type="protein sequence ID" value="AAA69277.1"/>
    <property type="status" value="ALT_INIT"/>
    <property type="molecule type" value="Genomic_DNA"/>
</dbReference>
<dbReference type="EMBL" id="U00096">
    <property type="protein sequence ID" value="AAC75809.2"/>
    <property type="molecule type" value="Genomic_DNA"/>
</dbReference>
<dbReference type="EMBL" id="AP009048">
    <property type="protein sequence ID" value="BAE76844.1"/>
    <property type="molecule type" value="Genomic_DNA"/>
</dbReference>
<dbReference type="PIR" id="C65058">
    <property type="entry name" value="C65058"/>
</dbReference>
<dbReference type="RefSeq" id="NP_417247.2">
    <property type="nucleotide sequence ID" value="NC_000913.3"/>
</dbReference>
<dbReference type="RefSeq" id="WP_000109529.1">
    <property type="nucleotide sequence ID" value="NZ_LN832404.1"/>
</dbReference>
<dbReference type="SMR" id="Q46905"/>
<dbReference type="BioGRID" id="4262290">
    <property type="interactions" value="29"/>
</dbReference>
<dbReference type="FunCoup" id="Q46905">
    <property type="interactions" value="41"/>
</dbReference>
<dbReference type="IntAct" id="Q46905">
    <property type="interactions" value="4"/>
</dbReference>
<dbReference type="STRING" id="511145.b2767"/>
<dbReference type="PaxDb" id="511145-b2767"/>
<dbReference type="EnsemblBacteria" id="AAC75809">
    <property type="protein sequence ID" value="AAC75809"/>
    <property type="gene ID" value="b2767"/>
</dbReference>
<dbReference type="GeneID" id="945120"/>
<dbReference type="KEGG" id="ecj:JW2737"/>
<dbReference type="KEGG" id="eco:b2767"/>
<dbReference type="KEGG" id="ecoc:C3026_15205"/>
<dbReference type="PATRIC" id="fig|1411691.4.peg.3970"/>
<dbReference type="EchoBASE" id="EB2923"/>
<dbReference type="eggNOG" id="COG2440">
    <property type="taxonomic scope" value="Bacteria"/>
</dbReference>
<dbReference type="HOGENOM" id="CLU_163428_1_0_6"/>
<dbReference type="InParanoid" id="Q46905"/>
<dbReference type="OMA" id="WLINACP"/>
<dbReference type="OrthoDB" id="9800260at2"/>
<dbReference type="PhylomeDB" id="Q46905"/>
<dbReference type="BioCyc" id="EcoCyc:G7433-MONOMER"/>
<dbReference type="PRO" id="PR:Q46905"/>
<dbReference type="Proteomes" id="UP000000625">
    <property type="component" value="Chromosome"/>
</dbReference>
<dbReference type="GO" id="GO:0005506">
    <property type="term" value="F:iron ion binding"/>
    <property type="evidence" value="ECO:0007669"/>
    <property type="project" value="InterPro"/>
</dbReference>
<dbReference type="GO" id="GO:0051536">
    <property type="term" value="F:iron-sulfur cluster binding"/>
    <property type="evidence" value="ECO:0007669"/>
    <property type="project" value="UniProtKB-KW"/>
</dbReference>
<dbReference type="GO" id="GO:0009294">
    <property type="term" value="P:DNA-mediated transformation"/>
    <property type="evidence" value="ECO:0000315"/>
    <property type="project" value="EcoCyc"/>
</dbReference>
<dbReference type="Gene3D" id="3.30.70.20">
    <property type="match status" value="1"/>
</dbReference>
<dbReference type="InterPro" id="IPR017896">
    <property type="entry name" value="4Fe4S_Fe-S-bd"/>
</dbReference>
<dbReference type="InterPro" id="IPR012206">
    <property type="entry name" value="Fd_FixX"/>
</dbReference>
<dbReference type="PANTHER" id="PTHR43082">
    <property type="entry name" value="FERREDOXIN-LIKE"/>
    <property type="match status" value="1"/>
</dbReference>
<dbReference type="PANTHER" id="PTHR43082:SF1">
    <property type="entry name" value="FERREDOXIN-LIKE PROTEIN FIXX-RELATED"/>
    <property type="match status" value="1"/>
</dbReference>
<dbReference type="PIRSF" id="PIRSF036548">
    <property type="entry name" value="Fdx_FixX"/>
    <property type="match status" value="1"/>
</dbReference>
<dbReference type="SUPFAM" id="SSF54862">
    <property type="entry name" value="4Fe-4S ferredoxins"/>
    <property type="match status" value="1"/>
</dbReference>
<dbReference type="PROSITE" id="PS51379">
    <property type="entry name" value="4FE4S_FER_2"/>
    <property type="match status" value="1"/>
</dbReference>
<accession>Q46905</accession>
<accession>Q2MA62</accession>
<feature type="chain" id="PRO_0000159219" description="Ferredoxin-like protein YgcO">
    <location>
        <begin position="1"/>
        <end position="86"/>
    </location>
</feature>
<feature type="domain" description="4Fe-4S ferredoxin-type" evidence="1">
    <location>
        <begin position="45"/>
        <end position="74"/>
    </location>
</feature>
<organism>
    <name type="scientific">Escherichia coli (strain K12)</name>
    <dbReference type="NCBI Taxonomy" id="83333"/>
    <lineage>
        <taxon>Bacteria</taxon>
        <taxon>Pseudomonadati</taxon>
        <taxon>Pseudomonadota</taxon>
        <taxon>Gammaproteobacteria</taxon>
        <taxon>Enterobacterales</taxon>
        <taxon>Enterobacteriaceae</taxon>
        <taxon>Escherichia</taxon>
    </lineage>
</organism>
<reference key="1">
    <citation type="journal article" date="1997" name="Science">
        <title>The complete genome sequence of Escherichia coli K-12.</title>
        <authorList>
            <person name="Blattner F.R."/>
            <person name="Plunkett G. III"/>
            <person name="Bloch C.A."/>
            <person name="Perna N.T."/>
            <person name="Burland V."/>
            <person name="Riley M."/>
            <person name="Collado-Vides J."/>
            <person name="Glasner J.D."/>
            <person name="Rode C.K."/>
            <person name="Mayhew G.F."/>
            <person name="Gregor J."/>
            <person name="Davis N.W."/>
            <person name="Kirkpatrick H.A."/>
            <person name="Goeden M.A."/>
            <person name="Rose D.J."/>
            <person name="Mau B."/>
            <person name="Shao Y."/>
        </authorList>
    </citation>
    <scope>NUCLEOTIDE SEQUENCE [LARGE SCALE GENOMIC DNA]</scope>
    <source>
        <strain>K12 / MG1655 / ATCC 47076</strain>
    </source>
</reference>
<reference key="2">
    <citation type="journal article" date="2006" name="Mol. Syst. Biol.">
        <title>Highly accurate genome sequences of Escherichia coli K-12 strains MG1655 and W3110.</title>
        <authorList>
            <person name="Hayashi K."/>
            <person name="Morooka N."/>
            <person name="Yamamoto Y."/>
            <person name="Fujita K."/>
            <person name="Isono K."/>
            <person name="Choi S."/>
            <person name="Ohtsubo E."/>
            <person name="Baba T."/>
            <person name="Wanner B.L."/>
            <person name="Mori H."/>
            <person name="Horiuchi T."/>
        </authorList>
    </citation>
    <scope>NUCLEOTIDE SEQUENCE [LARGE SCALE GENOMIC DNA]</scope>
    <source>
        <strain>K12 / W3110 / ATCC 27325 / DSM 5911</strain>
    </source>
</reference>
<protein>
    <recommendedName>
        <fullName>Ferredoxin-like protein YgcO</fullName>
    </recommendedName>
</protein>
<evidence type="ECO:0000255" key="1">
    <source>
        <dbReference type="PROSITE-ProRule" id="PRU00711"/>
    </source>
</evidence>
<evidence type="ECO:0000305" key="2"/>